<protein>
    <recommendedName>
        <fullName>Non-structural protein V</fullName>
    </recommendedName>
</protein>
<sequence length="299" mass="32132">MAEEQARHVKNGLECIRALKAEPIGSLAIGEAMAAWSEISDNPGQERATYKEEKAGGSGLSKPCLSAIGSTEGGAPRIRGQGSGESDDDTETLGIPSRNLQASSTGLQCHYVYDHSGEAVKGIQDADSIMVQSGLDGDSTLSEGDNESENSDVDIGEPDTEGYAITDRGSAPISMGFRASDVETAEGGEIHELLRLQSRGNNFPKLGKTLNVPPPPDPGRASTSETPIKKGHRREISLIWDGDRVFIDRWCNPMCSKVTLGTIRARCTCGECPRVCEQCRTDTGVDTRIWYHNLPEIPE</sequence>
<feature type="chain" id="PRO_0000142812" description="Non-structural protein V">
    <location>
        <begin position="1"/>
        <end position="299"/>
    </location>
</feature>
<feature type="region of interest" description="Disordered" evidence="6">
    <location>
        <begin position="40"/>
        <end position="91"/>
    </location>
</feature>
<feature type="region of interest" description="Interaction with host STAT1" evidence="2">
    <location>
        <begin position="110"/>
        <end position="120"/>
    </location>
</feature>
<feature type="region of interest" description="Disordered" evidence="6">
    <location>
        <begin position="133"/>
        <end position="163"/>
    </location>
</feature>
<feature type="compositionally biased region" description="Acidic residues" evidence="6">
    <location>
        <begin position="144"/>
        <end position="160"/>
    </location>
</feature>
<feature type="binding site" evidence="3">
    <location>
        <position position="232"/>
    </location>
    <ligand>
        <name>Zn(2+)</name>
        <dbReference type="ChEBI" id="CHEBI:29105"/>
        <label>1</label>
    </ligand>
</feature>
<feature type="binding site" evidence="3">
    <location>
        <position position="251"/>
    </location>
    <ligand>
        <name>Zn(2+)</name>
        <dbReference type="ChEBI" id="CHEBI:29105"/>
        <label>1</label>
    </ligand>
</feature>
<feature type="binding site" evidence="3">
    <location>
        <position position="255"/>
    </location>
    <ligand>
        <name>Zn(2+)</name>
        <dbReference type="ChEBI" id="CHEBI:29105"/>
        <label>2</label>
    </ligand>
</feature>
<feature type="binding site" evidence="3">
    <location>
        <position position="267"/>
    </location>
    <ligand>
        <name>Zn(2+)</name>
        <dbReference type="ChEBI" id="CHEBI:29105"/>
        <label>2</label>
    </ligand>
</feature>
<feature type="binding site" evidence="3">
    <location>
        <position position="269"/>
    </location>
    <ligand>
        <name>Zn(2+)</name>
        <dbReference type="ChEBI" id="CHEBI:29105"/>
        <label>2</label>
    </ligand>
</feature>
<feature type="binding site" evidence="3">
    <location>
        <position position="272"/>
    </location>
    <ligand>
        <name>Zn(2+)</name>
        <dbReference type="ChEBI" id="CHEBI:29105"/>
        <label>2</label>
    </ligand>
</feature>
<feature type="binding site" evidence="3">
    <location>
        <position position="276"/>
    </location>
    <ligand>
        <name>Zn(2+)</name>
        <dbReference type="ChEBI" id="CHEBI:29105"/>
        <label>1</label>
    </ligand>
</feature>
<feature type="binding site" evidence="3">
    <location>
        <position position="279"/>
    </location>
    <ligand>
        <name>Zn(2+)</name>
        <dbReference type="ChEBI" id="CHEBI:29105"/>
        <label>1</label>
    </ligand>
</feature>
<feature type="site" description="Interaction with host STAT2" evidence="2">
    <location>
        <position position="240"/>
    </location>
</feature>
<feature type="site" description="Interaction with host STAT2" evidence="2">
    <location>
        <position position="246"/>
    </location>
</feature>
<feature type="site" description="Interaction with host STAT2" evidence="2">
    <location>
        <position position="248"/>
    </location>
</feature>
<feature type="site" description="Interaction with host STAT2" evidence="2">
    <location>
        <position position="250"/>
    </location>
</feature>
<accession>P60168</accession>
<proteinExistence type="evidence at transcript level"/>
<gene>
    <name type="primary">P/V</name>
</gene>
<reference key="1">
    <citation type="journal article" date="1992" name="Biochim. Biophys. Acta">
        <title>Complete nucleotide sequence of the phosphoprotein of the Yamagata-1 strain of a defective subacute sclerosing panencephalitis (SSPE) virus.</title>
        <authorList>
            <person name="Komase K."/>
            <person name="Haga T."/>
            <person name="Yoshikawa Y."/>
            <person name="Yamanouchi K."/>
        </authorList>
    </citation>
    <scope>NUCLEOTIDE SEQUENCE [MRNA]</scope>
    <scope>RNA EDITING</scope>
</reference>
<keyword id="KW-1035">Host cytoplasm</keyword>
<keyword id="KW-0945">Host-virus interaction</keyword>
<keyword id="KW-1090">Inhibition of host innate immune response by virus</keyword>
<keyword id="KW-1114">Inhibition of host interferon signaling pathway by virus</keyword>
<keyword id="KW-1093">Inhibition of host IRF7 by virus</keyword>
<keyword id="KW-1089">Inhibition of host MDA5 by virus</keyword>
<keyword id="KW-1113">Inhibition of host RLR pathway by virus</keyword>
<keyword id="KW-1106">Inhibition of host STAT2 by virus</keyword>
<keyword id="KW-0922">Interferon antiviral system evasion</keyword>
<keyword id="KW-0479">Metal-binding</keyword>
<keyword id="KW-0691">RNA editing</keyword>
<keyword id="KW-0899">Viral immunoevasion</keyword>
<keyword id="KW-0862">Zinc</keyword>
<comment type="function">
    <text evidence="2 5">Plays an essential role in the inhibition of host immune response. Prevents the establishment of cellular antiviral state by blocking interferon-alpha/beta (IFN-alpha/beta) production and signaling pathway. Interacts with host IFIH1/MDA5 and DHX58/LGP2 to inhibit the transduction pathway involved in the activation of IFN-beta promoter, thus protecting the virus against cell antiviral state. Blocks the type I interferon signaling pathway by interacting with host TYK2 and thereby inhibiting downstream STAT1 and STAT2 phosphorylation (By similarity). Blocks the type I interferon signaling pathway by disrupting the RIG-I signaling pathway (By similarity). Moderately affects the type II interferon signaling. Prevents PP1alpha/gamma-mediated dephosphorylation of host IFIH1/MDA5 and thus blocks its activation (By similarity).</text>
</comment>
<comment type="subunit">
    <text evidence="2 4 5">Interacts with host IFIH1/MDA5 and DHX58/LGP2; these interactions are involved in the inhibition of the host type I interferon signaling pathway. Interacts with host TYK2; this interaction inhibits the type I interferon signaling pathway without affecting the type II pathway. Interacts with host IRF7; this interaction inhibits IRF7 translocation to the nucleus. Interacts with host CHUK (By similarity). Interacts with host RELA/p65; this interaction inhibits the nuclear translocation of NF-KappaB (By similarity). Interacts (via N-terminus) with host STAT1 and JAK1; these interactions inhibit STAT1 phosphorylation by Jak1 and thereby the type I interferon signaling pathway. Interacts (via C-terminus) with host STAT2; this interaction is involved in the inhibition of the host type I interferon signaling pathway. Forms a complex with host PPP1CA and PPP1CC; this interaction prevents dephosphorylation of host IFIH1/MDA5 and leads to the inhibition of the host type I interferon signaling pathway. Interacts with host IRF9; this interaction prevents the binding of IRF9 to STAT2 and thereby the type I interferon signaling pathway (By similarity). Interacts with host RIGI regulatory protein (via CARDs domain) and host TRIM25 (via SPRY domain); these interactions prevent TRIM25-mediated ubiquitination of RIG-I and disrupts downstream RIG-I signaling (By similarity).</text>
</comment>
<comment type="subcellular location">
    <subcellularLocation>
        <location evidence="1">Host cytoplasm</location>
    </subcellularLocation>
</comment>
<comment type="domain">
    <text evidence="2">The N-terminus interacts with host JAK1 and STAT1 (By similarity). The C-terminus interacts with host STAT2 (By similarity). The C-terminus also interacts with host PP1 (By similarity).</text>
</comment>
<comment type="RNA editing">
    <location>
        <position position="231" evidence="7"/>
    </location>
    <text>Partially edited. RNA editing at this position consists of an insertion of one guanine nucleotide. The sequence displayed here is the V protein, derived from the edited RNA. The unedited RNA gives rise to the P protein (AC Q00793).</text>
</comment>
<comment type="similarity">
    <text evidence="8">Belongs to the paramyxoviruses V protein family.</text>
</comment>
<evidence type="ECO:0000250" key="1"/>
<evidence type="ECO:0000250" key="2">
    <source>
        <dbReference type="UniProtKB" id="P0C774"/>
    </source>
</evidence>
<evidence type="ECO:0000250" key="3">
    <source>
        <dbReference type="UniProtKB" id="P11207"/>
    </source>
</evidence>
<evidence type="ECO:0000250" key="4">
    <source>
        <dbReference type="UniProtKB" id="Q77M19"/>
    </source>
</evidence>
<evidence type="ECO:0000250" key="5">
    <source>
        <dbReference type="UniProtKB" id="Q9EMA9"/>
    </source>
</evidence>
<evidence type="ECO:0000256" key="6">
    <source>
        <dbReference type="SAM" id="MobiDB-lite"/>
    </source>
</evidence>
<evidence type="ECO:0000269" key="7">
    <source>
    </source>
</evidence>
<evidence type="ECO:0000305" key="8"/>
<organismHost>
    <name type="scientific">Homo sapiens</name>
    <name type="common">Human</name>
    <dbReference type="NCBI Taxonomy" id="9606"/>
</organismHost>
<name>V_MEASY</name>
<dbReference type="EMBL" id="D10635">
    <property type="status" value="NOT_ANNOTATED_CDS"/>
    <property type="molecule type" value="mRNA"/>
</dbReference>
<dbReference type="SMR" id="P60168"/>
<dbReference type="GO" id="GO:0030430">
    <property type="term" value="C:host cell cytoplasm"/>
    <property type="evidence" value="ECO:0007669"/>
    <property type="project" value="UniProtKB-SubCell"/>
</dbReference>
<dbReference type="GO" id="GO:0046872">
    <property type="term" value="F:metal ion binding"/>
    <property type="evidence" value="ECO:0007669"/>
    <property type="project" value="UniProtKB-KW"/>
</dbReference>
<dbReference type="GO" id="GO:0039557">
    <property type="term" value="P:symbiont-mediated suppression of host cytoplasmic pattern recognition receptor signaling pathway via inhibition of IRF7 activity"/>
    <property type="evidence" value="ECO:0007669"/>
    <property type="project" value="UniProtKB-KW"/>
</dbReference>
<dbReference type="GO" id="GO:0039554">
    <property type="term" value="P:symbiont-mediated suppression of host cytoplasmic pattern recognition receptor signaling pathway via inhibition of MDA-5 activity"/>
    <property type="evidence" value="ECO:0007669"/>
    <property type="project" value="UniProtKB-KW"/>
</dbReference>
<dbReference type="GO" id="GO:0039564">
    <property type="term" value="P:symbiont-mediated suppression of host JAK-STAT cascade via inhibition of STAT2 activity"/>
    <property type="evidence" value="ECO:0007669"/>
    <property type="project" value="UniProtKB-KW"/>
</dbReference>
<dbReference type="GO" id="GO:0039502">
    <property type="term" value="P:symbiont-mediated suppression of host type I interferon-mediated signaling pathway"/>
    <property type="evidence" value="ECO:0007669"/>
    <property type="project" value="UniProtKB-KW"/>
</dbReference>
<dbReference type="Gene3D" id="4.10.80.340">
    <property type="match status" value="1"/>
</dbReference>
<dbReference type="InterPro" id="IPR024279">
    <property type="entry name" value="Paramyx_V_Zn-bd"/>
</dbReference>
<dbReference type="InterPro" id="IPR028243">
    <property type="entry name" value="Paramyxo_P/V_N"/>
</dbReference>
<dbReference type="Pfam" id="PF13825">
    <property type="entry name" value="Paramyxo_P_V_N"/>
    <property type="match status" value="1"/>
</dbReference>
<dbReference type="Pfam" id="PF13008">
    <property type="entry name" value="zf-Paramyx-P"/>
    <property type="match status" value="1"/>
</dbReference>
<organism>
    <name type="scientific">Measles virus (strain Yamagata-1)</name>
    <name type="common">MeV</name>
    <name type="synonym">Subacute sclerose panencephalitis virus</name>
    <dbReference type="NCBI Taxonomy" id="11239"/>
    <lineage>
        <taxon>Viruses</taxon>
        <taxon>Riboviria</taxon>
        <taxon>Orthornavirae</taxon>
        <taxon>Negarnaviricota</taxon>
        <taxon>Haploviricotina</taxon>
        <taxon>Monjiviricetes</taxon>
        <taxon>Mononegavirales</taxon>
        <taxon>Paramyxoviridae</taxon>
        <taxon>Orthoparamyxovirinae</taxon>
        <taxon>Morbillivirus</taxon>
        <taxon>Morbillivirus hominis</taxon>
        <taxon>Measles morbillivirus</taxon>
    </lineage>
</organism>